<sequence length="406" mass="43680">MSQPITRENFDEWMIPVYAPAPFIPVRGEGSRLWDQQGKEYIDFAGGIAVNALGHAHPELREALNEQASKFWHTGNGYTNESVLRLAKKLIDATFADRVFFCNSGAEANEAALKLARKFAHDRYGSHKSGIVAFKNAFHGRTLFTVSAGGQPAYSQDFAPLPPDIRHAAYNDINSASALIDDSTCAVIVEPIQGEGGVVPASNAFLQGLRELCDRHNALLIFDEVQTGVGRTGELYAYMHYGVTPDLLTTAKALGGGFPVGALLATEECASVMTVGTHGTTYGGNPLASAVAGKVLELINTPEMLNGVKQRHDWFVERLNIINHRYGLFNEVRGLGLLIGCVLNADYAGQAKQISQEAAKAGVMVLIAGGNVVRFAPALNVSEEEVTTGLDRFAVACEHFVSRGSS</sequence>
<gene>
    <name evidence="1" type="primary">astC</name>
    <name evidence="1" type="synonym">argM</name>
    <name type="ordered locus">ECH74115_2466</name>
</gene>
<organism>
    <name type="scientific">Escherichia coli O157:H7 (strain EC4115 / EHEC)</name>
    <dbReference type="NCBI Taxonomy" id="444450"/>
    <lineage>
        <taxon>Bacteria</taxon>
        <taxon>Pseudomonadati</taxon>
        <taxon>Pseudomonadota</taxon>
        <taxon>Gammaproteobacteria</taxon>
        <taxon>Enterobacterales</taxon>
        <taxon>Enterobacteriaceae</taxon>
        <taxon>Escherichia</taxon>
    </lineage>
</organism>
<keyword id="KW-0032">Aminotransferase</keyword>
<keyword id="KW-0056">Arginine metabolism</keyword>
<keyword id="KW-0663">Pyridoxal phosphate</keyword>
<keyword id="KW-0808">Transferase</keyword>
<dbReference type="EC" id="2.6.1.81" evidence="1"/>
<dbReference type="EMBL" id="CP001164">
    <property type="protein sequence ID" value="ACI39789.1"/>
    <property type="molecule type" value="Genomic_DNA"/>
</dbReference>
<dbReference type="RefSeq" id="WP_000082019.1">
    <property type="nucleotide sequence ID" value="NC_011353.1"/>
</dbReference>
<dbReference type="SMR" id="B5YQ35"/>
<dbReference type="KEGG" id="ecf:ECH74115_2466"/>
<dbReference type="HOGENOM" id="CLU_016922_10_1_6"/>
<dbReference type="UniPathway" id="UPA00185">
    <property type="reaction ID" value="UER00281"/>
</dbReference>
<dbReference type="GO" id="GO:0042802">
    <property type="term" value="F:identical protein binding"/>
    <property type="evidence" value="ECO:0007669"/>
    <property type="project" value="TreeGrafter"/>
</dbReference>
<dbReference type="GO" id="GO:0030170">
    <property type="term" value="F:pyridoxal phosphate binding"/>
    <property type="evidence" value="ECO:0007669"/>
    <property type="project" value="UniProtKB-UniRule"/>
</dbReference>
<dbReference type="GO" id="GO:0043825">
    <property type="term" value="F:succinylornithine transaminase activity"/>
    <property type="evidence" value="ECO:0007669"/>
    <property type="project" value="UniProtKB-EC"/>
</dbReference>
<dbReference type="GO" id="GO:1901607">
    <property type="term" value="P:alpha-amino acid biosynthetic process"/>
    <property type="evidence" value="ECO:0007669"/>
    <property type="project" value="UniProtKB-ARBA"/>
</dbReference>
<dbReference type="GO" id="GO:0019544">
    <property type="term" value="P:arginine catabolic process to glutamate"/>
    <property type="evidence" value="ECO:0007669"/>
    <property type="project" value="UniProtKB-UniRule"/>
</dbReference>
<dbReference type="GO" id="GO:0019545">
    <property type="term" value="P:arginine catabolic process to succinate"/>
    <property type="evidence" value="ECO:0007669"/>
    <property type="project" value="UniProtKB-UniRule"/>
</dbReference>
<dbReference type="GO" id="GO:0006593">
    <property type="term" value="P:ornithine catabolic process"/>
    <property type="evidence" value="ECO:0007669"/>
    <property type="project" value="InterPro"/>
</dbReference>
<dbReference type="CDD" id="cd00610">
    <property type="entry name" value="OAT_like"/>
    <property type="match status" value="1"/>
</dbReference>
<dbReference type="FunFam" id="3.40.640.10:FF:000004">
    <property type="entry name" value="Acetylornithine aminotransferase"/>
    <property type="match status" value="1"/>
</dbReference>
<dbReference type="FunFam" id="3.90.1150.10:FF:000009">
    <property type="entry name" value="Succinylornithine transaminase"/>
    <property type="match status" value="1"/>
</dbReference>
<dbReference type="Gene3D" id="3.90.1150.10">
    <property type="entry name" value="Aspartate Aminotransferase, domain 1"/>
    <property type="match status" value="1"/>
</dbReference>
<dbReference type="Gene3D" id="3.40.640.10">
    <property type="entry name" value="Type I PLP-dependent aspartate aminotransferase-like (Major domain)"/>
    <property type="match status" value="1"/>
</dbReference>
<dbReference type="HAMAP" id="MF_01107">
    <property type="entry name" value="ArgD_aminotrans_3"/>
    <property type="match status" value="1"/>
</dbReference>
<dbReference type="HAMAP" id="MF_01173">
    <property type="entry name" value="AstC_aminotrans_3"/>
    <property type="match status" value="1"/>
</dbReference>
<dbReference type="InterPro" id="IPR017652">
    <property type="entry name" value="Ac/SucOrn_transaminase_bac"/>
</dbReference>
<dbReference type="InterPro" id="IPR004636">
    <property type="entry name" value="AcOrn/SuccOrn_fam"/>
</dbReference>
<dbReference type="InterPro" id="IPR005814">
    <property type="entry name" value="Aminotrans_3"/>
</dbReference>
<dbReference type="InterPro" id="IPR049704">
    <property type="entry name" value="Aminotrans_3_PPA_site"/>
</dbReference>
<dbReference type="InterPro" id="IPR050103">
    <property type="entry name" value="Class-III_PLP-dep_AT"/>
</dbReference>
<dbReference type="InterPro" id="IPR015424">
    <property type="entry name" value="PyrdxlP-dep_Trfase"/>
</dbReference>
<dbReference type="InterPro" id="IPR015421">
    <property type="entry name" value="PyrdxlP-dep_Trfase_major"/>
</dbReference>
<dbReference type="InterPro" id="IPR015422">
    <property type="entry name" value="PyrdxlP-dep_Trfase_small"/>
</dbReference>
<dbReference type="InterPro" id="IPR026330">
    <property type="entry name" value="SOAT"/>
</dbReference>
<dbReference type="NCBIfam" id="TIGR03246">
    <property type="entry name" value="arg_catab_astC"/>
    <property type="match status" value="1"/>
</dbReference>
<dbReference type="NCBIfam" id="TIGR00707">
    <property type="entry name" value="argD"/>
    <property type="match status" value="1"/>
</dbReference>
<dbReference type="NCBIfam" id="NF002325">
    <property type="entry name" value="PRK01278.1"/>
    <property type="match status" value="1"/>
</dbReference>
<dbReference type="NCBIfam" id="NF003468">
    <property type="entry name" value="PRK05093.1"/>
    <property type="match status" value="1"/>
</dbReference>
<dbReference type="NCBIfam" id="NF009047">
    <property type="entry name" value="PRK12381.1"/>
    <property type="match status" value="1"/>
</dbReference>
<dbReference type="PANTHER" id="PTHR11986">
    <property type="entry name" value="AMINOTRANSFERASE CLASS III"/>
    <property type="match status" value="1"/>
</dbReference>
<dbReference type="PANTHER" id="PTHR11986:SF113">
    <property type="entry name" value="SUCCINYLORNITHINE TRANSAMINASE"/>
    <property type="match status" value="1"/>
</dbReference>
<dbReference type="Pfam" id="PF00202">
    <property type="entry name" value="Aminotran_3"/>
    <property type="match status" value="1"/>
</dbReference>
<dbReference type="PIRSF" id="PIRSF000521">
    <property type="entry name" value="Transaminase_4ab_Lys_Orn"/>
    <property type="match status" value="1"/>
</dbReference>
<dbReference type="SUPFAM" id="SSF53383">
    <property type="entry name" value="PLP-dependent transferases"/>
    <property type="match status" value="1"/>
</dbReference>
<dbReference type="PROSITE" id="PS00600">
    <property type="entry name" value="AA_TRANSFER_CLASS_3"/>
    <property type="match status" value="1"/>
</dbReference>
<reference key="1">
    <citation type="journal article" date="2011" name="Proc. Natl. Acad. Sci. U.S.A.">
        <title>Genomic anatomy of Escherichia coli O157:H7 outbreaks.</title>
        <authorList>
            <person name="Eppinger M."/>
            <person name="Mammel M.K."/>
            <person name="Leclerc J.E."/>
            <person name="Ravel J."/>
            <person name="Cebula T.A."/>
        </authorList>
    </citation>
    <scope>NUCLEOTIDE SEQUENCE [LARGE SCALE GENOMIC DNA]</scope>
    <source>
        <strain>EC4115 / EHEC</strain>
    </source>
</reference>
<comment type="function">
    <text evidence="1">Catalyzes the transamination of N(2)-succinylornithine and alpha-ketoglutarate into N(2)-succinylglutamate semialdehyde and glutamate. Can also act as an acetylornithine aminotransferase.</text>
</comment>
<comment type="catalytic activity">
    <reaction evidence="1">
        <text>N(2)-succinyl-L-ornithine + 2-oxoglutarate = N-succinyl-L-glutamate 5-semialdehyde + L-glutamate</text>
        <dbReference type="Rhea" id="RHEA:16953"/>
        <dbReference type="ChEBI" id="CHEBI:16810"/>
        <dbReference type="ChEBI" id="CHEBI:29985"/>
        <dbReference type="ChEBI" id="CHEBI:58514"/>
        <dbReference type="ChEBI" id="CHEBI:58520"/>
        <dbReference type="EC" id="2.6.1.81"/>
    </reaction>
</comment>
<comment type="cofactor">
    <cofactor evidence="1">
        <name>pyridoxal 5'-phosphate</name>
        <dbReference type="ChEBI" id="CHEBI:597326"/>
    </cofactor>
</comment>
<comment type="pathway">
    <text evidence="1">Amino-acid degradation; L-arginine degradation via AST pathway; L-glutamate and succinate from L-arginine: step 3/5.</text>
</comment>
<comment type="similarity">
    <text evidence="1">Belongs to the class-III pyridoxal-phosphate-dependent aminotransferase family. AstC subfamily.</text>
</comment>
<accession>B5YQ35</accession>
<feature type="chain" id="PRO_1000164377" description="Succinylornithine transaminase">
    <location>
        <begin position="1"/>
        <end position="406"/>
    </location>
</feature>
<feature type="modified residue" description="N6-(pyridoxal phosphate)lysine" evidence="1">
    <location>
        <position position="252"/>
    </location>
</feature>
<name>ASTC_ECO5E</name>
<proteinExistence type="inferred from homology"/>
<evidence type="ECO:0000255" key="1">
    <source>
        <dbReference type="HAMAP-Rule" id="MF_01173"/>
    </source>
</evidence>
<protein>
    <recommendedName>
        <fullName evidence="1">Succinylornithine transaminase</fullName>
        <ecNumber evidence="1">2.6.1.81</ecNumber>
    </recommendedName>
    <alternativeName>
        <fullName evidence="1">Succinylornithine aminotransferase</fullName>
    </alternativeName>
</protein>